<feature type="chain" id="PRO_0000341798" description="2-succinyl-5-enolpyruvyl-6-hydroxy-3-cyclohexene-1-carboxylate synthase">
    <location>
        <begin position="1"/>
        <end position="574"/>
    </location>
</feature>
<proteinExistence type="inferred from homology"/>
<name>MEND_PROMA</name>
<sequence length="574" mass="63209">MRAFQRYGLEHIVLCPGSRSAPLALAVGALIEESGINAYTAIDERSAAFMAIGISAASGKATIVITTSGTAVSNLLPAAVEADRSCLPIIFITADRPLRLKGCGSNQTVNQEDFLVPVCREVFNCPSIGLHEISGRSFFTLVKKTWEKAHAYPGPVHLNIPIEEPLHASFLEQKEVCNGWKPLNFEEIQLPISTVSTNTRIKTKEVPELDPSQPGIILAGPWRGKPSQLLGFRKAVKEFQSFTGWPLFADCLSAITIKQSGLISFWELLISAQIFESNDKLQVLRLGPLSCSRALESFLRNTNKKQVLITEGEERYLDPLHLAKQYSGGLQSWLKIFKSNYPNLNNNLVNDDTNILEDLLNKNQLVGDLVDKYLKEDSKITEPSIARKLLDLIPEDIPIMLSASSPVRDFLAYSGFSPFKRRLYSFRGASGIDGNLSLAIGLSIFLGPLVVVCGDLAFLHDSNALLLNQPKKYPLIILLIDNNGGGIFKQLSLAPIFKGSVDKLFSMPQSINIGDLAKAHNIPFRTISSFDELNSALEWSLKLSGPVIIRACTNSEEDTLLRKNITDGLKKYIN</sequence>
<comment type="function">
    <text evidence="1">Catalyzes the thiamine diphosphate-dependent decarboxylation of 2-oxoglutarate and the subsequent addition of the resulting succinic semialdehyde-thiamine pyrophosphate anion to isochorismate to yield 2-succinyl-5-enolpyruvyl-6-hydroxy-3-cyclohexene-1-carboxylate (SEPHCHC).</text>
</comment>
<comment type="catalytic activity">
    <reaction evidence="1">
        <text>isochorismate + 2-oxoglutarate + H(+) = 5-enolpyruvoyl-6-hydroxy-2-succinyl-cyclohex-3-ene-1-carboxylate + CO2</text>
        <dbReference type="Rhea" id="RHEA:25593"/>
        <dbReference type="ChEBI" id="CHEBI:15378"/>
        <dbReference type="ChEBI" id="CHEBI:16526"/>
        <dbReference type="ChEBI" id="CHEBI:16810"/>
        <dbReference type="ChEBI" id="CHEBI:29780"/>
        <dbReference type="ChEBI" id="CHEBI:58818"/>
        <dbReference type="EC" id="2.2.1.9"/>
    </reaction>
</comment>
<comment type="cofactor">
    <cofactor evidence="1">
        <name>Mg(2+)</name>
        <dbReference type="ChEBI" id="CHEBI:18420"/>
    </cofactor>
    <cofactor evidence="1">
        <name>Mn(2+)</name>
        <dbReference type="ChEBI" id="CHEBI:29035"/>
    </cofactor>
</comment>
<comment type="cofactor">
    <cofactor evidence="1">
        <name>thiamine diphosphate</name>
        <dbReference type="ChEBI" id="CHEBI:58937"/>
    </cofactor>
    <text evidence="1">Binds 1 thiamine pyrophosphate per subunit.</text>
</comment>
<comment type="pathway">
    <text evidence="1">Quinol/quinone metabolism; 1,4-dihydroxy-2-naphthoate biosynthesis; 1,4-dihydroxy-2-naphthoate from chorismate: step 2/7.</text>
</comment>
<comment type="pathway">
    <text evidence="1">Cofactor biosynthesis; phylloquinone biosynthesis.</text>
</comment>
<comment type="subunit">
    <text evidence="1">Homodimer.</text>
</comment>
<comment type="similarity">
    <text evidence="1">Belongs to the TPP enzyme family. MenD subfamily.</text>
</comment>
<keyword id="KW-0460">Magnesium</keyword>
<keyword id="KW-0464">Manganese</keyword>
<keyword id="KW-0479">Metal-binding</keyword>
<keyword id="KW-1185">Reference proteome</keyword>
<keyword id="KW-0786">Thiamine pyrophosphate</keyword>
<keyword id="KW-0808">Transferase</keyword>
<evidence type="ECO:0000255" key="1">
    <source>
        <dbReference type="HAMAP-Rule" id="MF_01659"/>
    </source>
</evidence>
<organism>
    <name type="scientific">Prochlorococcus marinus (strain SARG / CCMP1375 / SS120)</name>
    <dbReference type="NCBI Taxonomy" id="167539"/>
    <lineage>
        <taxon>Bacteria</taxon>
        <taxon>Bacillati</taxon>
        <taxon>Cyanobacteriota</taxon>
        <taxon>Cyanophyceae</taxon>
        <taxon>Synechococcales</taxon>
        <taxon>Prochlorococcaceae</taxon>
        <taxon>Prochlorococcus</taxon>
    </lineage>
</organism>
<accession>Q7VBN8</accession>
<protein>
    <recommendedName>
        <fullName evidence="1">2-succinyl-5-enolpyruvyl-6-hydroxy-3-cyclohexene-1-carboxylate synthase</fullName>
        <shortName evidence="1">SEPHCHC synthase</shortName>
        <ecNumber evidence="1">2.2.1.9</ecNumber>
    </recommendedName>
</protein>
<dbReference type="EC" id="2.2.1.9" evidence="1"/>
<dbReference type="EMBL" id="AE017126">
    <property type="protein sequence ID" value="AAQ00099.1"/>
    <property type="molecule type" value="Genomic_DNA"/>
</dbReference>
<dbReference type="RefSeq" id="NP_875446.1">
    <property type="nucleotide sequence ID" value="NC_005042.1"/>
</dbReference>
<dbReference type="RefSeq" id="WP_011125206.1">
    <property type="nucleotide sequence ID" value="NC_005042.1"/>
</dbReference>
<dbReference type="SMR" id="Q7VBN8"/>
<dbReference type="STRING" id="167539.Pro_1054"/>
<dbReference type="EnsemblBacteria" id="AAQ00099">
    <property type="protein sequence ID" value="AAQ00099"/>
    <property type="gene ID" value="Pro_1054"/>
</dbReference>
<dbReference type="KEGG" id="pma:Pro_1054"/>
<dbReference type="PATRIC" id="fig|167539.5.peg.1104"/>
<dbReference type="eggNOG" id="COG1165">
    <property type="taxonomic scope" value="Bacteria"/>
</dbReference>
<dbReference type="HOGENOM" id="CLU_006051_3_0_3"/>
<dbReference type="OrthoDB" id="9791859at2"/>
<dbReference type="UniPathway" id="UPA00995"/>
<dbReference type="UniPathway" id="UPA01057">
    <property type="reaction ID" value="UER00164"/>
</dbReference>
<dbReference type="Proteomes" id="UP000001420">
    <property type="component" value="Chromosome"/>
</dbReference>
<dbReference type="GO" id="GO:0070204">
    <property type="term" value="F:2-succinyl-5-enolpyruvyl-6-hydroxy-3-cyclohexene-1-carboxylic-acid synthase activity"/>
    <property type="evidence" value="ECO:0007669"/>
    <property type="project" value="UniProtKB-UniRule"/>
</dbReference>
<dbReference type="GO" id="GO:0000287">
    <property type="term" value="F:magnesium ion binding"/>
    <property type="evidence" value="ECO:0007669"/>
    <property type="project" value="UniProtKB-UniRule"/>
</dbReference>
<dbReference type="GO" id="GO:0030145">
    <property type="term" value="F:manganese ion binding"/>
    <property type="evidence" value="ECO:0007669"/>
    <property type="project" value="UniProtKB-UniRule"/>
</dbReference>
<dbReference type="GO" id="GO:0030976">
    <property type="term" value="F:thiamine pyrophosphate binding"/>
    <property type="evidence" value="ECO:0007669"/>
    <property type="project" value="UniProtKB-UniRule"/>
</dbReference>
<dbReference type="GO" id="GO:0009234">
    <property type="term" value="P:menaquinone biosynthetic process"/>
    <property type="evidence" value="ECO:0007669"/>
    <property type="project" value="InterPro"/>
</dbReference>
<dbReference type="GO" id="GO:0042372">
    <property type="term" value="P:phylloquinone biosynthetic process"/>
    <property type="evidence" value="ECO:0007669"/>
    <property type="project" value="UniProtKB-UniRule"/>
</dbReference>
<dbReference type="CDD" id="cd07037">
    <property type="entry name" value="TPP_PYR_MenD"/>
    <property type="match status" value="1"/>
</dbReference>
<dbReference type="CDD" id="cd02009">
    <property type="entry name" value="TPP_SHCHC_synthase"/>
    <property type="match status" value="1"/>
</dbReference>
<dbReference type="Gene3D" id="3.40.50.970">
    <property type="match status" value="2"/>
</dbReference>
<dbReference type="Gene3D" id="3.40.50.1220">
    <property type="entry name" value="TPP-binding domain"/>
    <property type="match status" value="1"/>
</dbReference>
<dbReference type="HAMAP" id="MF_01659">
    <property type="entry name" value="MenD"/>
    <property type="match status" value="1"/>
</dbReference>
<dbReference type="InterPro" id="IPR004433">
    <property type="entry name" value="MenaQ_synth_MenD"/>
</dbReference>
<dbReference type="InterPro" id="IPR029061">
    <property type="entry name" value="THDP-binding"/>
</dbReference>
<dbReference type="InterPro" id="IPR012001">
    <property type="entry name" value="Thiamin_PyroP_enz_TPP-bd_dom"/>
</dbReference>
<dbReference type="InterPro" id="IPR011766">
    <property type="entry name" value="TPP_enzyme_TPP-bd"/>
</dbReference>
<dbReference type="NCBIfam" id="TIGR00173">
    <property type="entry name" value="menD"/>
    <property type="match status" value="1"/>
</dbReference>
<dbReference type="PANTHER" id="PTHR42916">
    <property type="entry name" value="2-SUCCINYL-5-ENOLPYRUVYL-6-HYDROXY-3-CYCLOHEXENE-1-CARBOXYLATE SYNTHASE"/>
    <property type="match status" value="1"/>
</dbReference>
<dbReference type="PANTHER" id="PTHR42916:SF1">
    <property type="entry name" value="PROTEIN PHYLLO, CHLOROPLASTIC"/>
    <property type="match status" value="1"/>
</dbReference>
<dbReference type="Pfam" id="PF02775">
    <property type="entry name" value="TPP_enzyme_C"/>
    <property type="match status" value="1"/>
</dbReference>
<dbReference type="Pfam" id="PF02776">
    <property type="entry name" value="TPP_enzyme_N"/>
    <property type="match status" value="1"/>
</dbReference>
<dbReference type="PIRSF" id="PIRSF004983">
    <property type="entry name" value="MenD"/>
    <property type="match status" value="1"/>
</dbReference>
<dbReference type="SUPFAM" id="SSF52518">
    <property type="entry name" value="Thiamin diphosphate-binding fold (THDP-binding)"/>
    <property type="match status" value="2"/>
</dbReference>
<gene>
    <name evidence="1" type="primary">menD</name>
    <name type="ordered locus">Pro_1054</name>
</gene>
<reference key="1">
    <citation type="journal article" date="2003" name="Proc. Natl. Acad. Sci. U.S.A.">
        <title>Genome sequence of the cyanobacterium Prochlorococcus marinus SS120, a nearly minimal oxyphototrophic genome.</title>
        <authorList>
            <person name="Dufresne A."/>
            <person name="Salanoubat M."/>
            <person name="Partensky F."/>
            <person name="Artiguenave F."/>
            <person name="Axmann I.M."/>
            <person name="Barbe V."/>
            <person name="Duprat S."/>
            <person name="Galperin M.Y."/>
            <person name="Koonin E.V."/>
            <person name="Le Gall F."/>
            <person name="Makarova K.S."/>
            <person name="Ostrowski M."/>
            <person name="Oztas S."/>
            <person name="Robert C."/>
            <person name="Rogozin I.B."/>
            <person name="Scanlan D.J."/>
            <person name="Tandeau de Marsac N."/>
            <person name="Weissenbach J."/>
            <person name="Wincker P."/>
            <person name="Wolf Y.I."/>
            <person name="Hess W.R."/>
        </authorList>
    </citation>
    <scope>NUCLEOTIDE SEQUENCE [LARGE SCALE GENOMIC DNA]</scope>
    <source>
        <strain>SARG / CCMP1375 / SS120</strain>
    </source>
</reference>